<protein>
    <recommendedName>
        <fullName evidence="1">Small ribosomal subunit protein uS15</fullName>
    </recommendedName>
    <alternativeName>
        <fullName evidence="2">30S ribosomal protein S15</fullName>
    </alternativeName>
</protein>
<feature type="chain" id="PRO_0000115449" description="Small ribosomal subunit protein uS15">
    <location>
        <begin position="1"/>
        <end position="90"/>
    </location>
</feature>
<reference key="1">
    <citation type="journal article" date="2003" name="Proc. Natl. Acad. Sci. U.S.A.">
        <title>The complete genome sequence of the carcinogenic bacterium Helicobacter hepaticus.</title>
        <authorList>
            <person name="Suerbaum S."/>
            <person name="Josenhans C."/>
            <person name="Sterzenbach T."/>
            <person name="Drescher B."/>
            <person name="Brandt P."/>
            <person name="Bell M."/>
            <person name="Droege M."/>
            <person name="Fartmann B."/>
            <person name="Fischer H.-P."/>
            <person name="Ge Z."/>
            <person name="Hoerster A."/>
            <person name="Holland R."/>
            <person name="Klein K."/>
            <person name="Koenig J."/>
            <person name="Macko L."/>
            <person name="Mendz G.L."/>
            <person name="Nyakatura G."/>
            <person name="Schauer D.B."/>
            <person name="Shen Z."/>
            <person name="Weber J."/>
            <person name="Frosch M."/>
            <person name="Fox J.G."/>
        </authorList>
    </citation>
    <scope>NUCLEOTIDE SEQUENCE [LARGE SCALE GENOMIC DNA]</scope>
    <source>
        <strain>ATCC 51449 / 3B1</strain>
    </source>
</reference>
<name>RS15_HELHP</name>
<gene>
    <name evidence="1" type="primary">rpsO</name>
    <name type="ordered locus">HH_0541</name>
</gene>
<keyword id="KW-1185">Reference proteome</keyword>
<keyword id="KW-0687">Ribonucleoprotein</keyword>
<keyword id="KW-0689">Ribosomal protein</keyword>
<keyword id="KW-0694">RNA-binding</keyword>
<keyword id="KW-0699">rRNA-binding</keyword>
<sequence length="90" mass="10226">MALDMAKKKEIIAKFARDSKDTGSSEVQIALLSQRIADLTEHLKANPKDHSSRLGLLKLVGQRKSLLSYLKKTQYNRYAKLIGELKLKDR</sequence>
<comment type="function">
    <text evidence="1">One of the primary rRNA binding proteins, it binds directly to 16S rRNA where it helps nucleate assembly of the platform of the 30S subunit by binding and bridging several RNA helices of the 16S rRNA.</text>
</comment>
<comment type="function">
    <text evidence="1">Forms an intersubunit bridge (bridge B4) with the 23S rRNA of the 50S subunit in the ribosome.</text>
</comment>
<comment type="subunit">
    <text evidence="1">Part of the 30S ribosomal subunit. Forms a bridge to the 50S subunit in the 70S ribosome, contacting the 23S rRNA.</text>
</comment>
<comment type="similarity">
    <text evidence="1">Belongs to the universal ribosomal protein uS15 family.</text>
</comment>
<dbReference type="EMBL" id="AE017125">
    <property type="protein sequence ID" value="AAP77138.1"/>
    <property type="molecule type" value="Genomic_DNA"/>
</dbReference>
<dbReference type="RefSeq" id="WP_011115383.1">
    <property type="nucleotide sequence ID" value="NC_004917.1"/>
</dbReference>
<dbReference type="SMR" id="Q7VIR3"/>
<dbReference type="STRING" id="235279.HH_0541"/>
<dbReference type="GeneID" id="82320940"/>
<dbReference type="KEGG" id="hhe:HH_0541"/>
<dbReference type="eggNOG" id="COG0184">
    <property type="taxonomic scope" value="Bacteria"/>
</dbReference>
<dbReference type="HOGENOM" id="CLU_148518_0_0_7"/>
<dbReference type="OrthoDB" id="9799262at2"/>
<dbReference type="Proteomes" id="UP000002495">
    <property type="component" value="Chromosome"/>
</dbReference>
<dbReference type="GO" id="GO:0022627">
    <property type="term" value="C:cytosolic small ribosomal subunit"/>
    <property type="evidence" value="ECO:0007669"/>
    <property type="project" value="TreeGrafter"/>
</dbReference>
<dbReference type="GO" id="GO:0019843">
    <property type="term" value="F:rRNA binding"/>
    <property type="evidence" value="ECO:0007669"/>
    <property type="project" value="UniProtKB-UniRule"/>
</dbReference>
<dbReference type="GO" id="GO:0003735">
    <property type="term" value="F:structural constituent of ribosome"/>
    <property type="evidence" value="ECO:0007669"/>
    <property type="project" value="InterPro"/>
</dbReference>
<dbReference type="GO" id="GO:0006412">
    <property type="term" value="P:translation"/>
    <property type="evidence" value="ECO:0007669"/>
    <property type="project" value="UniProtKB-UniRule"/>
</dbReference>
<dbReference type="CDD" id="cd00353">
    <property type="entry name" value="Ribosomal_S15p_S13e"/>
    <property type="match status" value="1"/>
</dbReference>
<dbReference type="FunFam" id="1.10.287.10:FF:000002">
    <property type="entry name" value="30S ribosomal protein S15"/>
    <property type="match status" value="1"/>
</dbReference>
<dbReference type="Gene3D" id="6.10.250.3130">
    <property type="match status" value="1"/>
</dbReference>
<dbReference type="Gene3D" id="1.10.287.10">
    <property type="entry name" value="S15/NS1, RNA-binding"/>
    <property type="match status" value="1"/>
</dbReference>
<dbReference type="HAMAP" id="MF_01343_B">
    <property type="entry name" value="Ribosomal_uS15_B"/>
    <property type="match status" value="1"/>
</dbReference>
<dbReference type="InterPro" id="IPR000589">
    <property type="entry name" value="Ribosomal_uS15"/>
</dbReference>
<dbReference type="InterPro" id="IPR005290">
    <property type="entry name" value="Ribosomal_uS15_bac-type"/>
</dbReference>
<dbReference type="InterPro" id="IPR009068">
    <property type="entry name" value="uS15_NS1_RNA-bd_sf"/>
</dbReference>
<dbReference type="NCBIfam" id="TIGR00952">
    <property type="entry name" value="S15_bact"/>
    <property type="match status" value="1"/>
</dbReference>
<dbReference type="PANTHER" id="PTHR23321">
    <property type="entry name" value="RIBOSOMAL PROTEIN S15, BACTERIAL AND ORGANELLAR"/>
    <property type="match status" value="1"/>
</dbReference>
<dbReference type="PANTHER" id="PTHR23321:SF26">
    <property type="entry name" value="SMALL RIBOSOMAL SUBUNIT PROTEIN US15M"/>
    <property type="match status" value="1"/>
</dbReference>
<dbReference type="Pfam" id="PF00312">
    <property type="entry name" value="Ribosomal_S15"/>
    <property type="match status" value="1"/>
</dbReference>
<dbReference type="SMART" id="SM01387">
    <property type="entry name" value="Ribosomal_S15"/>
    <property type="match status" value="1"/>
</dbReference>
<dbReference type="SUPFAM" id="SSF47060">
    <property type="entry name" value="S15/NS1 RNA-binding domain"/>
    <property type="match status" value="1"/>
</dbReference>
<dbReference type="PROSITE" id="PS00362">
    <property type="entry name" value="RIBOSOMAL_S15"/>
    <property type="match status" value="1"/>
</dbReference>
<accession>Q7VIR3</accession>
<evidence type="ECO:0000255" key="1">
    <source>
        <dbReference type="HAMAP-Rule" id="MF_01343"/>
    </source>
</evidence>
<evidence type="ECO:0000305" key="2"/>
<proteinExistence type="inferred from homology"/>
<organism>
    <name type="scientific">Helicobacter hepaticus (strain ATCC 51449 / 3B1)</name>
    <dbReference type="NCBI Taxonomy" id="235279"/>
    <lineage>
        <taxon>Bacteria</taxon>
        <taxon>Pseudomonadati</taxon>
        <taxon>Campylobacterota</taxon>
        <taxon>Epsilonproteobacteria</taxon>
        <taxon>Campylobacterales</taxon>
        <taxon>Helicobacteraceae</taxon>
        <taxon>Helicobacter</taxon>
    </lineage>
</organism>